<organism evidence="8">
    <name type="scientific">Bacillus cereus (strain ATCC 14579 / DSM 31 / CCUG 7414 / JCM 2152 / NBRC 15305 / NCIMB 9373 / NCTC 2599 / NRRL B-3711)</name>
    <dbReference type="NCBI Taxonomy" id="226900"/>
    <lineage>
        <taxon>Bacteria</taxon>
        <taxon>Bacillati</taxon>
        <taxon>Bacillota</taxon>
        <taxon>Bacilli</taxon>
        <taxon>Bacillales</taxon>
        <taxon>Bacillaceae</taxon>
        <taxon>Bacillus</taxon>
        <taxon>Bacillus cereus group</taxon>
    </lineage>
</organism>
<reference evidence="8 9" key="1">
    <citation type="journal article" date="2003" name="Nature">
        <title>Genome sequence of Bacillus cereus and comparative analysis with Bacillus anthracis.</title>
        <authorList>
            <person name="Ivanova N."/>
            <person name="Sorokin A."/>
            <person name="Anderson I."/>
            <person name="Galleron N."/>
            <person name="Candelon B."/>
            <person name="Kapatral V."/>
            <person name="Bhattacharyya A."/>
            <person name="Reznik G."/>
            <person name="Mikhailova N."/>
            <person name="Lapidus A."/>
            <person name="Chu L."/>
            <person name="Mazur M."/>
            <person name="Goltsman E."/>
            <person name="Larsen N."/>
            <person name="D'Souza M."/>
            <person name="Walunas T."/>
            <person name="Grechkin Y."/>
            <person name="Pusch G."/>
            <person name="Haselkorn R."/>
            <person name="Fonstein M."/>
            <person name="Ehrlich S.D."/>
            <person name="Overbeek R."/>
            <person name="Kyrpides N.C."/>
        </authorList>
    </citation>
    <scope>NUCLEOTIDE SEQUENCE [LARGE SCALE GENOMIC DNA]</scope>
    <source>
        <strain evidence="9">ATCC 14579 / DSM 31 / CCUG 7414 / JCM 2152 / NBRC 15305 / NCIMB 9373 / NCTC 2599 / NRRL B-3711</strain>
    </source>
</reference>
<reference key="2">
    <citation type="journal article" date="2007" name="Arch. Biochem. Biophys.">
        <title>Cloning, expression and characterization of a fast self-sufficient P450: CYP102A5 from Bacillus cereus.</title>
        <authorList>
            <person name="Chowdhary P.K."/>
            <person name="Alemseghed M."/>
            <person name="Haines D.C."/>
        </authorList>
    </citation>
    <scope>FUNCTION</scope>
    <scope>CATALYTIC ACTIVITY</scope>
    <scope>COFACTOR</scope>
    <scope>BIOPHYSICOCHEMICAL PROPERTIES</scope>
    <source>
        <strain evidence="6">ATCC 14579 / DSM 31 / CCUG 7414 / JCM 2152 / NBRC 15305 / NCIMB 9373 / NCTC 2599 / NRRL B-3711</strain>
    </source>
</reference>
<sequence length="1065" mass="120821">MEKKVSAIPQPKTYGPLGNLPLIDKDKPTLSFIKIAEEYGPIFQIQTLSDTIIVVSGHELVAEVCDETRFDKSIEGALAKVRAFAGDGLFTSETHEPNWKKAHNILMPTFSQRAMKDYHAMMVDIAVQLVQKWARLNPNENVDVPEDMTRLTLDTIGLCGFNYRFNSFYRETPHPFITSMTRALDEAMHQLQRLDIEDKLMWRTKRQFQHDIQSMFSLVDNIIAERKSSGDQEENDLLSRMLNVPDPETGEKLDDENIRFQIITFLIAGHETTSGLLSFAIYFLLKNPDKLKKAYEEVDRVLTDPTPTYQQVMKLKYMRMILNESLRLWPTAPAFSLYAKEDTVIGGKYPIKKGEDRISVLIPQLHRDKDAWGDNVEEFQPERFEELDKVPHHAYKPFGNGQRACIGMQFALHEATLVMGMLLQHFELIDYQNYQLDVKQTLTLKPGDFKIRILPRKQTISHPTVLAPTEDKLKNDEIKQHVQKTPSIIGADNLSLLVLYGSDTGVAEGIARELADTASLEGVQTEVVALNDRIGSLPKEGAVLIVTSSYNGKPPSNAGQFVQWLEELKPDELKGVQYAVFGCGDHNWASTYQRIPRYIDEQMAQKGATRFSKRGEADASGDFEEQLEQWKQNMWSDAMKAFGLELNKNMEKERSTLSLQFVSRLGGSPLARTYEAVYASILENRELQSSSSDRSTRHIEVSLPEGATYKEGDHLGVLPVNSEKNINRILKRFGLNGKDQVILSASGRSINHIPLDSPVSLLALLSYSVEVQEAATRAQIREMVTFTACPPHKKELEALLEEGVYHEQILKKRISMLDLLEKYEACEIRFERFLELLPALKPRYYSISSSPLVAHNRLSITVGVVNAPAWSGEGTYEGVASNYLAQRHNKDEIICFIRTPQSNFELPKDPETPIIMVGPGTGIAPFRGFLQARRVQKQKGMNLGQAHLYFGCRHPEKDYLYRTELENDERDGLISLHTAFSRLEGHPKTYVQHLIKQDRINLISLLDNGAHLYICGDGSKMAPDVEDTLCQAYQEIHEVSEQEARNWLDRVQDEGRYGKDVWAGI</sequence>
<evidence type="ECO:0000250" key="1">
    <source>
        <dbReference type="UniProtKB" id="P14779"/>
    </source>
</evidence>
<evidence type="ECO:0000255" key="2">
    <source>
        <dbReference type="PIRSR" id="PIRSR000209-1"/>
    </source>
</evidence>
<evidence type="ECO:0000255" key="3">
    <source>
        <dbReference type="PROSITE-ProRule" id="PRU00088"/>
    </source>
</evidence>
<evidence type="ECO:0000255" key="4">
    <source>
        <dbReference type="PROSITE-ProRule" id="PRU00716"/>
    </source>
</evidence>
<evidence type="ECO:0000269" key="5">
    <source>
    </source>
</evidence>
<evidence type="ECO:0000303" key="6">
    <source>
    </source>
</evidence>
<evidence type="ECO:0000305" key="7"/>
<evidence type="ECO:0000312" key="8">
    <source>
        <dbReference type="EMBL" id="AAP10153.1"/>
    </source>
</evidence>
<evidence type="ECO:0000312" key="9">
    <source>
        <dbReference type="Proteomes" id="UP000001417"/>
    </source>
</evidence>
<evidence type="ECO:0007829" key="10">
    <source>
        <dbReference type="PDB" id="8HKJ"/>
    </source>
</evidence>
<proteinExistence type="evidence at protein level"/>
<keyword id="KW-0002">3D-structure</keyword>
<keyword id="KW-0249">Electron transport</keyword>
<keyword id="KW-0274">FAD</keyword>
<keyword id="KW-0285">Flavoprotein</keyword>
<keyword id="KW-0288">FMN</keyword>
<keyword id="KW-0349">Heme</keyword>
<keyword id="KW-0408">Iron</keyword>
<keyword id="KW-0479">Metal-binding</keyword>
<keyword id="KW-0503">Monooxygenase</keyword>
<keyword id="KW-0511">Multifunctional enzyme</keyword>
<keyword id="KW-0521">NADP</keyword>
<keyword id="KW-0560">Oxidoreductase</keyword>
<keyword id="KW-1185">Reference proteome</keyword>
<keyword id="KW-0813">Transport</keyword>
<accession>Q81BF4</accession>
<comment type="function">
    <text evidence="5">Functions as a fatty acid monooxygenase. Catalyzes hydroxylation of fatty acids at omega-1, omega-2 and omega-3 positions, yielding primarily omega-1 and omega-2 hydroxylated products. Metabolizes unsaturated and saturated fatty acids as well as N-acylamino acids. Has a preference for long-chain unsaturated fatty acids over saturated fatty acids. Shows activity toward saturated fatty acids with a chain length of 9-18 carbons with preference for longer fatty acids. Also displays a NADPH-dependent reductase activity in the C-terminal domain, which allows electron transfer from NADPH to the heme iron of the cytochrome P450 N-terminal domain.</text>
</comment>
<comment type="catalytic activity">
    <reaction evidence="5">
        <text>2 oxidized [cytochrome P450] + NADPH = 2 reduced [cytochrome P450] + NADP(+) + H(+)</text>
        <dbReference type="Rhea" id="RHEA:24040"/>
        <dbReference type="Rhea" id="RHEA-COMP:14627"/>
        <dbReference type="Rhea" id="RHEA-COMP:14628"/>
        <dbReference type="ChEBI" id="CHEBI:15378"/>
        <dbReference type="ChEBI" id="CHEBI:55376"/>
        <dbReference type="ChEBI" id="CHEBI:57783"/>
        <dbReference type="ChEBI" id="CHEBI:58349"/>
        <dbReference type="ChEBI" id="CHEBI:60344"/>
        <dbReference type="EC" id="1.6.2.4"/>
    </reaction>
</comment>
<comment type="catalytic activity">
    <reaction evidence="5">
        <text>an organic molecule + reduced [NADPH--hemoprotein reductase] + O2 = an alcohol + oxidized [NADPH--hemoprotein reductase] + H2O + H(+)</text>
        <dbReference type="Rhea" id="RHEA:17149"/>
        <dbReference type="Rhea" id="RHEA-COMP:11964"/>
        <dbReference type="Rhea" id="RHEA-COMP:11965"/>
        <dbReference type="ChEBI" id="CHEBI:15377"/>
        <dbReference type="ChEBI" id="CHEBI:15378"/>
        <dbReference type="ChEBI" id="CHEBI:15379"/>
        <dbReference type="ChEBI" id="CHEBI:30879"/>
        <dbReference type="ChEBI" id="CHEBI:57618"/>
        <dbReference type="ChEBI" id="CHEBI:58210"/>
        <dbReference type="ChEBI" id="CHEBI:142491"/>
        <dbReference type="EC" id="1.14.14.1"/>
    </reaction>
</comment>
<comment type="cofactor">
    <cofactor evidence="5">
        <name>heme</name>
        <dbReference type="ChEBI" id="CHEBI:30413"/>
    </cofactor>
</comment>
<comment type="cofactor">
    <cofactor evidence="5">
        <name>FAD</name>
        <dbReference type="ChEBI" id="CHEBI:57692"/>
    </cofactor>
</comment>
<comment type="cofactor">
    <cofactor evidence="5">
        <name>FMN</name>
        <dbReference type="ChEBI" id="CHEBI:58210"/>
    </cofactor>
</comment>
<comment type="biophysicochemical properties">
    <kinetics>
        <KM evidence="5">230 uM for palmitic acid</KM>
        <KM evidence="5">31.6 uM for linoleic acid</KM>
    </kinetics>
</comment>
<comment type="similarity">
    <text evidence="1">In the N-terminal section; belongs to the cytochrome P450 family.</text>
</comment>
<dbReference type="EC" id="1.14.14.1" evidence="5"/>
<dbReference type="EC" id="1.6.2.4" evidence="5 8"/>
<dbReference type="EMBL" id="AE016877">
    <property type="protein sequence ID" value="AAP10153.1"/>
    <property type="molecule type" value="Genomic_DNA"/>
</dbReference>
<dbReference type="RefSeq" id="NP_832952.1">
    <property type="nucleotide sequence ID" value="NC_004722.1"/>
</dbReference>
<dbReference type="RefSeq" id="WP_000412767.1">
    <property type="nucleotide sequence ID" value="NC_004722.1"/>
</dbReference>
<dbReference type="PDB" id="8HKJ">
    <property type="method" value="X-ray"/>
    <property type="resolution" value="2.80 A"/>
    <property type="chains" value="A/B/C/D/E/F/G/H/I/J/K/L=1-458"/>
</dbReference>
<dbReference type="PDBsum" id="8HKJ"/>
<dbReference type="SMR" id="Q81BF4"/>
<dbReference type="STRING" id="226900.BC_3211"/>
<dbReference type="KEGG" id="bce:BC3211"/>
<dbReference type="PATRIC" id="fig|226900.8.peg.3293"/>
<dbReference type="HOGENOM" id="CLU_001570_7_0_9"/>
<dbReference type="SABIO-RK" id="Q81BF4"/>
<dbReference type="Proteomes" id="UP000001417">
    <property type="component" value="Chromosome"/>
</dbReference>
<dbReference type="GO" id="GO:0005829">
    <property type="term" value="C:cytosol"/>
    <property type="evidence" value="ECO:0000318"/>
    <property type="project" value="GO_Central"/>
</dbReference>
<dbReference type="GO" id="GO:0070330">
    <property type="term" value="F:aromatase activity"/>
    <property type="evidence" value="ECO:0007669"/>
    <property type="project" value="InterPro"/>
</dbReference>
<dbReference type="GO" id="GO:0050660">
    <property type="term" value="F:flavin adenine dinucleotide binding"/>
    <property type="evidence" value="ECO:0000318"/>
    <property type="project" value="GO_Central"/>
</dbReference>
<dbReference type="GO" id="GO:0010181">
    <property type="term" value="F:FMN binding"/>
    <property type="evidence" value="ECO:0000318"/>
    <property type="project" value="GO_Central"/>
</dbReference>
<dbReference type="GO" id="GO:0020037">
    <property type="term" value="F:heme binding"/>
    <property type="evidence" value="ECO:0007669"/>
    <property type="project" value="InterPro"/>
</dbReference>
<dbReference type="GO" id="GO:0005506">
    <property type="term" value="F:iron ion binding"/>
    <property type="evidence" value="ECO:0007669"/>
    <property type="project" value="InterPro"/>
</dbReference>
<dbReference type="GO" id="GO:0003958">
    <property type="term" value="F:NADPH-hemoprotein reductase activity"/>
    <property type="evidence" value="ECO:0007669"/>
    <property type="project" value="UniProtKB-EC"/>
</dbReference>
<dbReference type="GO" id="GO:0016491">
    <property type="term" value="F:oxidoreductase activity"/>
    <property type="evidence" value="ECO:0000318"/>
    <property type="project" value="GO_Central"/>
</dbReference>
<dbReference type="CDD" id="cd06206">
    <property type="entry name" value="bifunctional_CYPOR"/>
    <property type="match status" value="1"/>
</dbReference>
<dbReference type="CDD" id="cd11068">
    <property type="entry name" value="CYP120A1"/>
    <property type="match status" value="1"/>
</dbReference>
<dbReference type="FunFam" id="1.10.630.10:FF:000040">
    <property type="entry name" value="Bifunctional cytochrome P450/NADPH--P450 reductase"/>
    <property type="match status" value="1"/>
</dbReference>
<dbReference type="FunFam" id="1.20.990.10:FF:000011">
    <property type="entry name" value="Bifunctional cytochrome P450/NADPH--P450 reductase"/>
    <property type="match status" value="1"/>
</dbReference>
<dbReference type="FunFam" id="3.40.50.360:FF:000048">
    <property type="entry name" value="Bifunctional cytochrome P450/NADPH--P450 reductase"/>
    <property type="match status" value="1"/>
</dbReference>
<dbReference type="FunFam" id="3.40.50.80:FF:000031">
    <property type="entry name" value="Bifunctional cytochrome P450/NADPH--P450 reductase"/>
    <property type="match status" value="1"/>
</dbReference>
<dbReference type="Gene3D" id="3.40.50.360">
    <property type="match status" value="1"/>
</dbReference>
<dbReference type="Gene3D" id="1.10.630.10">
    <property type="entry name" value="Cytochrome P450"/>
    <property type="match status" value="1"/>
</dbReference>
<dbReference type="Gene3D" id="1.20.990.10">
    <property type="entry name" value="NADPH-cytochrome p450 Reductase, Chain A, domain 3"/>
    <property type="match status" value="1"/>
</dbReference>
<dbReference type="Gene3D" id="3.40.50.80">
    <property type="entry name" value="Nucleotide-binding domain of ferredoxin-NADP reductase (FNR) module"/>
    <property type="match status" value="1"/>
</dbReference>
<dbReference type="Gene3D" id="2.40.30.10">
    <property type="entry name" value="Translation factors"/>
    <property type="match status" value="1"/>
</dbReference>
<dbReference type="InterPro" id="IPR023206">
    <property type="entry name" value="Bifunctional_P450_P450_red"/>
</dbReference>
<dbReference type="InterPro" id="IPR003097">
    <property type="entry name" value="CysJ-like_FAD-binding"/>
</dbReference>
<dbReference type="InterPro" id="IPR001128">
    <property type="entry name" value="Cyt_P450"/>
</dbReference>
<dbReference type="InterPro" id="IPR017972">
    <property type="entry name" value="Cyt_P450_CS"/>
</dbReference>
<dbReference type="InterPro" id="IPR036396">
    <property type="entry name" value="Cyt_P450_sf"/>
</dbReference>
<dbReference type="InterPro" id="IPR017927">
    <property type="entry name" value="FAD-bd_FR_type"/>
</dbReference>
<dbReference type="InterPro" id="IPR001094">
    <property type="entry name" value="Flavdoxin-like"/>
</dbReference>
<dbReference type="InterPro" id="IPR008254">
    <property type="entry name" value="Flavodoxin/NO_synth"/>
</dbReference>
<dbReference type="InterPro" id="IPR001709">
    <property type="entry name" value="Flavoprot_Pyr_Nucl_cyt_Rdtase"/>
</dbReference>
<dbReference type="InterPro" id="IPR029039">
    <property type="entry name" value="Flavoprotein-like_sf"/>
</dbReference>
<dbReference type="InterPro" id="IPR039261">
    <property type="entry name" value="FNR_nucleotide-bd"/>
</dbReference>
<dbReference type="InterPro" id="IPR023173">
    <property type="entry name" value="NADPH_Cyt_P450_Rdtase_alpha"/>
</dbReference>
<dbReference type="InterPro" id="IPR001433">
    <property type="entry name" value="OxRdtase_FAD/NAD-bd"/>
</dbReference>
<dbReference type="InterPro" id="IPR017938">
    <property type="entry name" value="Riboflavin_synthase-like_b-brl"/>
</dbReference>
<dbReference type="PANTHER" id="PTHR19384:SF17">
    <property type="entry name" value="NADPH--CYTOCHROME P450 REDUCTASE"/>
    <property type="match status" value="1"/>
</dbReference>
<dbReference type="PANTHER" id="PTHR19384">
    <property type="entry name" value="NITRIC OXIDE SYNTHASE-RELATED"/>
    <property type="match status" value="1"/>
</dbReference>
<dbReference type="Pfam" id="PF00667">
    <property type="entry name" value="FAD_binding_1"/>
    <property type="match status" value="1"/>
</dbReference>
<dbReference type="Pfam" id="PF00258">
    <property type="entry name" value="Flavodoxin_1"/>
    <property type="match status" value="1"/>
</dbReference>
<dbReference type="Pfam" id="PF00175">
    <property type="entry name" value="NAD_binding_1"/>
    <property type="match status" value="1"/>
</dbReference>
<dbReference type="Pfam" id="PF00067">
    <property type="entry name" value="p450"/>
    <property type="match status" value="1"/>
</dbReference>
<dbReference type="PIRSF" id="PIRSF000209">
    <property type="entry name" value="Bifunctional_P450_P450R"/>
    <property type="match status" value="1"/>
</dbReference>
<dbReference type="PRINTS" id="PR00369">
    <property type="entry name" value="FLAVODOXIN"/>
</dbReference>
<dbReference type="PRINTS" id="PR00371">
    <property type="entry name" value="FPNCR"/>
</dbReference>
<dbReference type="SUPFAM" id="SSF48264">
    <property type="entry name" value="Cytochrome P450"/>
    <property type="match status" value="1"/>
</dbReference>
<dbReference type="SUPFAM" id="SSF52343">
    <property type="entry name" value="Ferredoxin reductase-like, C-terminal NADP-linked domain"/>
    <property type="match status" value="1"/>
</dbReference>
<dbReference type="SUPFAM" id="SSF52218">
    <property type="entry name" value="Flavoproteins"/>
    <property type="match status" value="1"/>
</dbReference>
<dbReference type="SUPFAM" id="SSF63380">
    <property type="entry name" value="Riboflavin synthase domain-like"/>
    <property type="match status" value="1"/>
</dbReference>
<dbReference type="PROSITE" id="PS00086">
    <property type="entry name" value="CYTOCHROME_P450"/>
    <property type="match status" value="1"/>
</dbReference>
<dbReference type="PROSITE" id="PS51384">
    <property type="entry name" value="FAD_FR"/>
    <property type="match status" value="1"/>
</dbReference>
<dbReference type="PROSITE" id="PS50902">
    <property type="entry name" value="FLAVODOXIN_LIKE"/>
    <property type="match status" value="1"/>
</dbReference>
<protein>
    <recommendedName>
        <fullName evidence="7">Bifunctional cytochrome P450/NADPH--P450 reductase</fullName>
    </recommendedName>
    <alternativeName>
        <fullName evidence="7">Fatty acid monooxygenase</fullName>
    </alternativeName>
    <alternativeName>
        <fullName evidence="7">Flavocytochrome P450</fullName>
    </alternativeName>
    <domain>
        <recommendedName>
            <fullName evidence="7">Cytochrome P450 102A5</fullName>
            <ecNumber evidence="5">1.14.14.1</ecNumber>
        </recommendedName>
    </domain>
    <domain>
        <recommendedName>
            <fullName evidence="8">NADPH--cytochrome P450 reductase</fullName>
            <ecNumber evidence="5 8">1.6.2.4</ecNumber>
        </recommendedName>
    </domain>
</protein>
<name>C102_BACCR</name>
<gene>
    <name evidence="6" type="primary">CYP102A5</name>
    <name evidence="8" type="ordered locus">BC_3211</name>
</gene>
<feature type="chain" id="PRO_0000436056" description="Bifunctional cytochrome P450/NADPH--P450 reductase">
    <location>
        <begin position="1"/>
        <end position="1065"/>
    </location>
</feature>
<feature type="domain" description="Flavodoxin-like" evidence="3">
    <location>
        <begin position="496"/>
        <end position="635"/>
    </location>
</feature>
<feature type="domain" description="FAD-binding FR-type" evidence="4">
    <location>
        <begin position="674"/>
        <end position="907"/>
    </location>
</feature>
<feature type="region of interest" description="Cytochrome P450" evidence="1">
    <location>
        <begin position="1"/>
        <end position="479"/>
    </location>
</feature>
<feature type="region of interest" description="NADPH--P450 reductase" evidence="1">
    <location>
        <begin position="480"/>
        <end position="1065"/>
    </location>
</feature>
<feature type="binding site" description="axial binding residue" evidence="1 2">
    <location>
        <position position="405"/>
    </location>
    <ligand>
        <name>heme</name>
        <dbReference type="ChEBI" id="CHEBI:30413"/>
    </ligand>
    <ligandPart>
        <name>Fe</name>
        <dbReference type="ChEBI" id="CHEBI:18248"/>
    </ligandPart>
</feature>
<feature type="binding site" evidence="1">
    <location>
        <begin position="502"/>
        <end position="507"/>
    </location>
    <ligand>
        <name>FMN</name>
        <dbReference type="ChEBI" id="CHEBI:58210"/>
    </ligand>
</feature>
<feature type="binding site" evidence="1">
    <location>
        <begin position="549"/>
        <end position="552"/>
    </location>
    <ligand>
        <name>FMN</name>
        <dbReference type="ChEBI" id="CHEBI:58210"/>
    </ligand>
</feature>
<feature type="binding site" evidence="1">
    <location>
        <begin position="583"/>
        <end position="585"/>
    </location>
    <ligand>
        <name>FMN</name>
        <dbReference type="ChEBI" id="CHEBI:58210"/>
    </ligand>
</feature>
<feature type="binding site" evidence="1">
    <location>
        <begin position="591"/>
        <end position="593"/>
    </location>
    <ligand>
        <name>FMN</name>
        <dbReference type="ChEBI" id="CHEBI:58210"/>
    </ligand>
</feature>
<feature type="site" description="Important for catalytic activity" evidence="1">
    <location>
        <position position="272"/>
    </location>
</feature>
<feature type="helix" evidence="10">
    <location>
        <begin position="15"/>
        <end position="17"/>
    </location>
</feature>
<feature type="helix" evidence="10">
    <location>
        <begin position="20"/>
        <end position="22"/>
    </location>
</feature>
<feature type="helix" evidence="10">
    <location>
        <begin position="28"/>
        <end position="39"/>
    </location>
</feature>
<feature type="strand" evidence="10">
    <location>
        <begin position="41"/>
        <end position="46"/>
    </location>
</feature>
<feature type="strand" evidence="10">
    <location>
        <begin position="51"/>
        <end position="55"/>
    </location>
</feature>
<feature type="helix" evidence="10">
    <location>
        <begin position="58"/>
        <end position="64"/>
    </location>
</feature>
<feature type="turn" evidence="10">
    <location>
        <begin position="67"/>
        <end position="69"/>
    </location>
</feature>
<feature type="strand" evidence="10">
    <location>
        <begin position="70"/>
        <end position="72"/>
    </location>
</feature>
<feature type="helix" evidence="10">
    <location>
        <begin position="77"/>
        <end position="85"/>
    </location>
</feature>
<feature type="turn" evidence="10">
    <location>
        <begin position="89"/>
        <end position="91"/>
    </location>
</feature>
<feature type="helix" evidence="10">
    <location>
        <begin position="97"/>
        <end position="106"/>
    </location>
</feature>
<feature type="helix" evidence="10">
    <location>
        <begin position="108"/>
        <end position="110"/>
    </location>
</feature>
<feature type="turn" evidence="10">
    <location>
        <begin position="112"/>
        <end position="114"/>
    </location>
</feature>
<feature type="helix" evidence="10">
    <location>
        <begin position="115"/>
        <end position="134"/>
    </location>
</feature>
<feature type="helix" evidence="10">
    <location>
        <begin position="144"/>
        <end position="161"/>
    </location>
</feature>
<feature type="helix" evidence="10">
    <location>
        <begin position="167"/>
        <end position="169"/>
    </location>
</feature>
<feature type="helix" evidence="10">
    <location>
        <begin position="175"/>
        <end position="185"/>
    </location>
</feature>
<feature type="helix" evidence="10">
    <location>
        <begin position="210"/>
        <end position="227"/>
    </location>
</feature>
<feature type="helix" evidence="10">
    <location>
        <begin position="237"/>
        <end position="243"/>
    </location>
</feature>
<feature type="turn" evidence="10">
    <location>
        <begin position="247"/>
        <end position="249"/>
    </location>
</feature>
<feature type="helix" evidence="10">
    <location>
        <begin position="255"/>
        <end position="286"/>
    </location>
</feature>
<feature type="helix" evidence="10">
    <location>
        <begin position="288"/>
        <end position="301"/>
    </location>
</feature>
<feature type="strand" evidence="10">
    <location>
        <begin position="304"/>
        <end position="306"/>
    </location>
</feature>
<feature type="helix" evidence="10">
    <location>
        <begin position="309"/>
        <end position="313"/>
    </location>
</feature>
<feature type="helix" evidence="10">
    <location>
        <begin position="316"/>
        <end position="328"/>
    </location>
</feature>
<feature type="strand" evidence="10">
    <location>
        <begin position="334"/>
        <end position="345"/>
    </location>
</feature>
<feature type="turn" evidence="10">
    <location>
        <begin position="346"/>
        <end position="348"/>
    </location>
</feature>
<feature type="strand" evidence="10">
    <location>
        <begin position="349"/>
        <end position="351"/>
    </location>
</feature>
<feature type="turn" evidence="10">
    <location>
        <begin position="353"/>
        <end position="355"/>
    </location>
</feature>
<feature type="strand" evidence="10">
    <location>
        <begin position="357"/>
        <end position="361"/>
    </location>
</feature>
<feature type="helix" evidence="10">
    <location>
        <begin position="362"/>
        <end position="365"/>
    </location>
</feature>
<feature type="helix" evidence="10">
    <location>
        <begin position="369"/>
        <end position="372"/>
    </location>
</feature>
<feature type="helix" evidence="10">
    <location>
        <begin position="381"/>
        <end position="384"/>
    </location>
</feature>
<feature type="turn" evidence="10">
    <location>
        <begin position="387"/>
        <end position="389"/>
    </location>
</feature>
<feature type="helix" evidence="10">
    <location>
        <begin position="401"/>
        <end position="403"/>
    </location>
</feature>
<feature type="helix" evidence="10">
    <location>
        <begin position="408"/>
        <end position="425"/>
    </location>
</feature>
<feature type="strand" evidence="10">
    <location>
        <begin position="426"/>
        <end position="429"/>
    </location>
</feature>
<feature type="strand" evidence="10">
    <location>
        <begin position="438"/>
        <end position="448"/>
    </location>
</feature>
<feature type="strand" evidence="10">
    <location>
        <begin position="450"/>
        <end position="455"/>
    </location>
</feature>